<protein>
    <recommendedName>
        <fullName evidence="1">Probable chemoreceptor glutamine deamidase CheD</fullName>
        <ecNumber evidence="1">3.5.1.44</ecNumber>
    </recommendedName>
</protein>
<organism>
    <name type="scientific">Pseudomonas syringae pv. syringae (strain B728a)</name>
    <dbReference type="NCBI Taxonomy" id="205918"/>
    <lineage>
        <taxon>Bacteria</taxon>
        <taxon>Pseudomonadati</taxon>
        <taxon>Pseudomonadota</taxon>
        <taxon>Gammaproteobacteria</taxon>
        <taxon>Pseudomonadales</taxon>
        <taxon>Pseudomonadaceae</taxon>
        <taxon>Pseudomonas</taxon>
        <taxon>Pseudomonas syringae</taxon>
    </lineage>
</organism>
<sequence length="177" mass="20047">MNTPVGVAEIVLGPGEVVFQTRPTRLRTLLGSCVAITFWHPWRRIGGMCHFMLPGRIRRHQPLDGRYADEAMEILIRHALANGTLPEEYQVKLFGGGEMFPAHRHDPHMRNVADSNVHAALALAEQNRLKLMAQDLGSTGHRSIIFDLWDGNVWVRHQPMEAMEKDAKQKNQRTAGR</sequence>
<dbReference type="EC" id="3.5.1.44" evidence="1"/>
<dbReference type="EMBL" id="CP000075">
    <property type="protein sequence ID" value="AAY35840.1"/>
    <property type="molecule type" value="Genomic_DNA"/>
</dbReference>
<dbReference type="RefSeq" id="WP_003403301.1">
    <property type="nucleotide sequence ID" value="NC_007005.1"/>
</dbReference>
<dbReference type="RefSeq" id="YP_233878.1">
    <property type="nucleotide sequence ID" value="NC_007005.1"/>
</dbReference>
<dbReference type="SMR" id="Q4ZYD2"/>
<dbReference type="STRING" id="205918.Psyr_0782"/>
<dbReference type="KEGG" id="psb:Psyr_0782"/>
<dbReference type="PATRIC" id="fig|205918.7.peg.808"/>
<dbReference type="eggNOG" id="COG1871">
    <property type="taxonomic scope" value="Bacteria"/>
</dbReference>
<dbReference type="HOGENOM" id="CLU_087854_1_1_6"/>
<dbReference type="OrthoDB" id="9807202at2"/>
<dbReference type="Proteomes" id="UP000000426">
    <property type="component" value="Chromosome"/>
</dbReference>
<dbReference type="GO" id="GO:0050568">
    <property type="term" value="F:protein-glutamine glutaminase activity"/>
    <property type="evidence" value="ECO:0007669"/>
    <property type="project" value="UniProtKB-UniRule"/>
</dbReference>
<dbReference type="GO" id="GO:0006935">
    <property type="term" value="P:chemotaxis"/>
    <property type="evidence" value="ECO:0007669"/>
    <property type="project" value="UniProtKB-UniRule"/>
</dbReference>
<dbReference type="CDD" id="cd16352">
    <property type="entry name" value="CheD"/>
    <property type="match status" value="1"/>
</dbReference>
<dbReference type="Gene3D" id="3.30.1330.200">
    <property type="match status" value="1"/>
</dbReference>
<dbReference type="HAMAP" id="MF_01440">
    <property type="entry name" value="CheD"/>
    <property type="match status" value="1"/>
</dbReference>
<dbReference type="InterPro" id="IPR038592">
    <property type="entry name" value="CheD-like_sf"/>
</dbReference>
<dbReference type="InterPro" id="IPR005659">
    <property type="entry name" value="Chemorcpt_Glu_NH3ase_CheD"/>
</dbReference>
<dbReference type="InterPro" id="IPR011324">
    <property type="entry name" value="Cytotoxic_necrot_fac-like_cat"/>
</dbReference>
<dbReference type="NCBIfam" id="NF010020">
    <property type="entry name" value="PRK13498.1"/>
    <property type="match status" value="1"/>
</dbReference>
<dbReference type="PANTHER" id="PTHR35147:SF3">
    <property type="entry name" value="CHEMORECEPTOR GLUTAMINE DEAMIDASE CHED 1-RELATED"/>
    <property type="match status" value="1"/>
</dbReference>
<dbReference type="PANTHER" id="PTHR35147">
    <property type="entry name" value="CHEMORECEPTOR GLUTAMINE DEAMIDASE CHED-RELATED"/>
    <property type="match status" value="1"/>
</dbReference>
<dbReference type="Pfam" id="PF03975">
    <property type="entry name" value="CheD"/>
    <property type="match status" value="1"/>
</dbReference>
<dbReference type="SUPFAM" id="SSF64438">
    <property type="entry name" value="CNF1/YfiH-like putative cysteine hydrolases"/>
    <property type="match status" value="1"/>
</dbReference>
<evidence type="ECO:0000255" key="1">
    <source>
        <dbReference type="HAMAP-Rule" id="MF_01440"/>
    </source>
</evidence>
<name>CHED_PSEU2</name>
<accession>Q4ZYD2</accession>
<gene>
    <name evidence="1" type="primary">cheD</name>
    <name type="ordered locus">Psyr_0782</name>
</gene>
<reference key="1">
    <citation type="journal article" date="2005" name="Proc. Natl. Acad. Sci. U.S.A.">
        <title>Comparison of the complete genome sequences of Pseudomonas syringae pv. syringae B728a and pv. tomato DC3000.</title>
        <authorList>
            <person name="Feil H."/>
            <person name="Feil W.S."/>
            <person name="Chain P."/>
            <person name="Larimer F."/>
            <person name="Dibartolo G."/>
            <person name="Copeland A."/>
            <person name="Lykidis A."/>
            <person name="Trong S."/>
            <person name="Nolan M."/>
            <person name="Goltsman E."/>
            <person name="Thiel J."/>
            <person name="Malfatti S."/>
            <person name="Loper J.E."/>
            <person name="Lapidus A."/>
            <person name="Detter J.C."/>
            <person name="Land M."/>
            <person name="Richardson P.M."/>
            <person name="Kyrpides N.C."/>
            <person name="Ivanova N."/>
            <person name="Lindow S.E."/>
        </authorList>
    </citation>
    <scope>NUCLEOTIDE SEQUENCE [LARGE SCALE GENOMIC DNA]</scope>
    <source>
        <strain>B728a</strain>
    </source>
</reference>
<keyword id="KW-0145">Chemotaxis</keyword>
<keyword id="KW-0378">Hydrolase</keyword>
<feature type="chain" id="PRO_0000251051" description="Probable chemoreceptor glutamine deamidase CheD">
    <location>
        <begin position="1"/>
        <end position="177"/>
    </location>
</feature>
<proteinExistence type="inferred from homology"/>
<comment type="function">
    <text evidence="1">Probably deamidates glutamine residues to glutamate on methyl-accepting chemotaxis receptors (MCPs), playing an important role in chemotaxis.</text>
</comment>
<comment type="catalytic activity">
    <reaction evidence="1">
        <text>L-glutaminyl-[protein] + H2O = L-glutamyl-[protein] + NH4(+)</text>
        <dbReference type="Rhea" id="RHEA:16441"/>
        <dbReference type="Rhea" id="RHEA-COMP:10207"/>
        <dbReference type="Rhea" id="RHEA-COMP:10208"/>
        <dbReference type="ChEBI" id="CHEBI:15377"/>
        <dbReference type="ChEBI" id="CHEBI:28938"/>
        <dbReference type="ChEBI" id="CHEBI:29973"/>
        <dbReference type="ChEBI" id="CHEBI:30011"/>
        <dbReference type="EC" id="3.5.1.44"/>
    </reaction>
</comment>
<comment type="similarity">
    <text evidence="1">Belongs to the CheD family.</text>
</comment>